<accession>A7H1M6</accession>
<dbReference type="EMBL" id="CP000768">
    <property type="protein sequence ID" value="ABS43989.1"/>
    <property type="molecule type" value="Genomic_DNA"/>
</dbReference>
<dbReference type="SMR" id="A7H1M6"/>
<dbReference type="KEGG" id="cjd:JJD26997_0163"/>
<dbReference type="HOGENOM" id="CLU_115353_3_2_7"/>
<dbReference type="Proteomes" id="UP000002302">
    <property type="component" value="Chromosome"/>
</dbReference>
<dbReference type="GO" id="GO:0003676">
    <property type="term" value="F:nucleic acid binding"/>
    <property type="evidence" value="ECO:0007669"/>
    <property type="project" value="InterPro"/>
</dbReference>
<dbReference type="Gene3D" id="3.40.1350.10">
    <property type="match status" value="1"/>
</dbReference>
<dbReference type="HAMAP" id="MF_00048">
    <property type="entry name" value="UPF0102"/>
    <property type="match status" value="1"/>
</dbReference>
<dbReference type="InterPro" id="IPR011335">
    <property type="entry name" value="Restrct_endonuc-II-like"/>
</dbReference>
<dbReference type="InterPro" id="IPR011856">
    <property type="entry name" value="tRNA_endonuc-like_dom_sf"/>
</dbReference>
<dbReference type="InterPro" id="IPR003509">
    <property type="entry name" value="UPF0102_YraN-like"/>
</dbReference>
<dbReference type="NCBIfam" id="NF009152">
    <property type="entry name" value="PRK12497.2-4"/>
    <property type="match status" value="1"/>
</dbReference>
<dbReference type="PANTHER" id="PTHR34039">
    <property type="entry name" value="UPF0102 PROTEIN YRAN"/>
    <property type="match status" value="1"/>
</dbReference>
<dbReference type="PANTHER" id="PTHR34039:SF1">
    <property type="entry name" value="UPF0102 PROTEIN YRAN"/>
    <property type="match status" value="1"/>
</dbReference>
<dbReference type="Pfam" id="PF02021">
    <property type="entry name" value="UPF0102"/>
    <property type="match status" value="1"/>
</dbReference>
<dbReference type="SUPFAM" id="SSF52980">
    <property type="entry name" value="Restriction endonuclease-like"/>
    <property type="match status" value="1"/>
</dbReference>
<evidence type="ECO:0000255" key="1">
    <source>
        <dbReference type="HAMAP-Rule" id="MF_00048"/>
    </source>
</evidence>
<name>Y163_CAMJD</name>
<feature type="chain" id="PRO_1000009197" description="UPF0102 protein JJD26997_0163">
    <location>
        <begin position="1"/>
        <end position="112"/>
    </location>
</feature>
<protein>
    <recommendedName>
        <fullName evidence="1">UPF0102 protein JJD26997_0163</fullName>
    </recommendedName>
</protein>
<reference key="1">
    <citation type="submission" date="2007-07" db="EMBL/GenBank/DDBJ databases">
        <title>Complete genome sequence of Campylobacter jejuni subsp doylei 269.97 isolated from human blood.</title>
        <authorList>
            <person name="Fouts D.E."/>
            <person name="Mongodin E.F."/>
            <person name="Puiu D."/>
            <person name="Sebastian Y."/>
            <person name="Miller W.G."/>
            <person name="Mandrell R.E."/>
            <person name="Lastovica A.J."/>
            <person name="Nelson K.E."/>
        </authorList>
    </citation>
    <scope>NUCLEOTIDE SEQUENCE [LARGE SCALE GENOMIC DNA]</scope>
    <source>
        <strain>ATCC BAA-1458 / RM4099 / 269.97</strain>
    </source>
</reference>
<comment type="similarity">
    <text evidence="1">Belongs to the UPF0102 family.</text>
</comment>
<proteinExistence type="inferred from homology"/>
<gene>
    <name type="ordered locus">JJD26997_0163</name>
</gene>
<organism>
    <name type="scientific">Campylobacter jejuni subsp. doylei (strain ATCC BAA-1458 / RM4099 / 269.97)</name>
    <dbReference type="NCBI Taxonomy" id="360109"/>
    <lineage>
        <taxon>Bacteria</taxon>
        <taxon>Pseudomonadati</taxon>
        <taxon>Campylobacterota</taxon>
        <taxon>Epsilonproteobacteria</taxon>
        <taxon>Campylobacterales</taxon>
        <taxon>Campylobacteraceae</taxon>
        <taxon>Campylobacter</taxon>
    </lineage>
</organism>
<sequence>MGVKAYLDGILGEDKACKFLKKQGFEILKRNFHSKFGEIDIIAKKDEILHFIEIKFTQNNYEVSERLDRKKLEKILKTIEFYHLKNGISSDFQIDLICIKNDVIQFCENISF</sequence>